<name>BDNF_FELCA</name>
<reference key="1">
    <citation type="journal article" date="2000" name="J. Comp. Neurol.">
        <title>Dynamic regulation of BDNF and NT-3 expression during visual system development.</title>
        <authorList>
            <person name="Lein E.S."/>
            <person name="Hohn A."/>
            <person name="Shatz C.J."/>
        </authorList>
    </citation>
    <scope>NUCLEOTIDE SEQUENCE [GENOMIC DNA]</scope>
</reference>
<proteinExistence type="inferred from homology"/>
<dbReference type="EMBL" id="AF192537">
    <property type="protein sequence ID" value="AAF03423.1"/>
    <property type="molecule type" value="Genomic_DNA"/>
</dbReference>
<dbReference type="RefSeq" id="NP_001009828.1">
    <property type="nucleotide sequence ID" value="NM_001009828.1"/>
</dbReference>
<dbReference type="SMR" id="Q9TST3"/>
<dbReference type="STRING" id="9685.ENSFCAP00000049682"/>
<dbReference type="GlyCosmos" id="Q9TST3">
    <property type="glycosylation" value="1 site, No reported glycans"/>
</dbReference>
<dbReference type="PaxDb" id="9685-ENSFCAP00000010815"/>
<dbReference type="GeneID" id="493690"/>
<dbReference type="KEGG" id="fca:493690"/>
<dbReference type="CTD" id="627"/>
<dbReference type="eggNOG" id="ENOG502QRU8">
    <property type="taxonomic scope" value="Eukaryota"/>
</dbReference>
<dbReference type="InParanoid" id="Q9TST3"/>
<dbReference type="OrthoDB" id="8959386at2759"/>
<dbReference type="Proteomes" id="UP000011712">
    <property type="component" value="Unplaced"/>
</dbReference>
<dbReference type="GO" id="GO:0030424">
    <property type="term" value="C:axon"/>
    <property type="evidence" value="ECO:0000318"/>
    <property type="project" value="GO_Central"/>
</dbReference>
<dbReference type="GO" id="GO:0005737">
    <property type="term" value="C:cytoplasm"/>
    <property type="evidence" value="ECO:0000250"/>
    <property type="project" value="UniProtKB"/>
</dbReference>
<dbReference type="GO" id="GO:0030425">
    <property type="term" value="C:dendrite"/>
    <property type="evidence" value="ECO:0000318"/>
    <property type="project" value="GO_Central"/>
</dbReference>
<dbReference type="GO" id="GO:0005615">
    <property type="term" value="C:extracellular space"/>
    <property type="evidence" value="ECO:0000318"/>
    <property type="project" value="GO_Central"/>
</dbReference>
<dbReference type="GO" id="GO:0048471">
    <property type="term" value="C:perinuclear region of cytoplasm"/>
    <property type="evidence" value="ECO:0000250"/>
    <property type="project" value="UniProtKB"/>
</dbReference>
<dbReference type="GO" id="GO:0008021">
    <property type="term" value="C:synaptic vesicle"/>
    <property type="evidence" value="ECO:0000318"/>
    <property type="project" value="GO_Central"/>
</dbReference>
<dbReference type="GO" id="GO:0008083">
    <property type="term" value="F:growth factor activity"/>
    <property type="evidence" value="ECO:0000318"/>
    <property type="project" value="GO_Central"/>
</dbReference>
<dbReference type="GO" id="GO:0005163">
    <property type="term" value="F:nerve growth factor receptor binding"/>
    <property type="evidence" value="ECO:0000318"/>
    <property type="project" value="GO_Central"/>
</dbReference>
<dbReference type="GO" id="GO:0007169">
    <property type="term" value="P:cell surface receptor protein tyrosine kinase signaling pathway"/>
    <property type="evidence" value="ECO:0000318"/>
    <property type="project" value="GO_Central"/>
</dbReference>
<dbReference type="GO" id="GO:0050804">
    <property type="term" value="P:modulation of chemical synaptic transmission"/>
    <property type="evidence" value="ECO:0000318"/>
    <property type="project" value="GO_Central"/>
</dbReference>
<dbReference type="GO" id="GO:0043524">
    <property type="term" value="P:negative regulation of neuron apoptotic process"/>
    <property type="evidence" value="ECO:0000318"/>
    <property type="project" value="GO_Central"/>
</dbReference>
<dbReference type="GO" id="GO:0021675">
    <property type="term" value="P:nerve development"/>
    <property type="evidence" value="ECO:0000318"/>
    <property type="project" value="GO_Central"/>
</dbReference>
<dbReference type="GO" id="GO:0038180">
    <property type="term" value="P:nerve growth factor signaling pathway"/>
    <property type="evidence" value="ECO:0000318"/>
    <property type="project" value="GO_Central"/>
</dbReference>
<dbReference type="GO" id="GO:0048812">
    <property type="term" value="P:neuron projection morphogenesis"/>
    <property type="evidence" value="ECO:0000318"/>
    <property type="project" value="GO_Central"/>
</dbReference>
<dbReference type="FunFam" id="2.10.90.10:FF:000002">
    <property type="entry name" value="Brain-derived neurotrophic factor"/>
    <property type="match status" value="1"/>
</dbReference>
<dbReference type="Gene3D" id="2.10.90.10">
    <property type="entry name" value="Cystine-knot cytokines"/>
    <property type="match status" value="1"/>
</dbReference>
<dbReference type="InterPro" id="IPR020430">
    <property type="entry name" value="Brain-der_neurotrophic_factor"/>
</dbReference>
<dbReference type="InterPro" id="IPR029034">
    <property type="entry name" value="Cystine-knot_cytokine"/>
</dbReference>
<dbReference type="InterPro" id="IPR020408">
    <property type="entry name" value="Nerve_growth_factor-like"/>
</dbReference>
<dbReference type="InterPro" id="IPR002072">
    <property type="entry name" value="Nerve_growth_factor-rel"/>
</dbReference>
<dbReference type="InterPro" id="IPR019846">
    <property type="entry name" value="Nerve_growth_factor_CS"/>
</dbReference>
<dbReference type="PANTHER" id="PTHR11589:SF3">
    <property type="entry name" value="BRAIN-DERIVED NEUROTROPHIC FACTOR"/>
    <property type="match status" value="1"/>
</dbReference>
<dbReference type="PANTHER" id="PTHR11589">
    <property type="entry name" value="NERVE GROWTH FACTOR NGF -RELATED"/>
    <property type="match status" value="1"/>
</dbReference>
<dbReference type="Pfam" id="PF00243">
    <property type="entry name" value="NGF"/>
    <property type="match status" value="1"/>
</dbReference>
<dbReference type="PIRSF" id="PIRSF001789">
    <property type="entry name" value="NGF"/>
    <property type="match status" value="1"/>
</dbReference>
<dbReference type="PRINTS" id="PR01912">
    <property type="entry name" value="BDNFACTOR"/>
</dbReference>
<dbReference type="PRINTS" id="PR00268">
    <property type="entry name" value="NGF"/>
</dbReference>
<dbReference type="SMART" id="SM00140">
    <property type="entry name" value="NGF"/>
    <property type="match status" value="1"/>
</dbReference>
<dbReference type="SUPFAM" id="SSF57501">
    <property type="entry name" value="Cystine-knot cytokines"/>
    <property type="match status" value="1"/>
</dbReference>
<dbReference type="PROSITE" id="PS00248">
    <property type="entry name" value="NGF_1"/>
    <property type="match status" value="1"/>
</dbReference>
<dbReference type="PROSITE" id="PS50270">
    <property type="entry name" value="NGF_2"/>
    <property type="match status" value="1"/>
</dbReference>
<feature type="signal peptide" evidence="3">
    <location>
        <begin position="1"/>
        <end position="18"/>
    </location>
</feature>
<feature type="chain" id="PRO_0000447531" description="Neurotrophic factor BDNF precursor form">
    <location>
        <begin position="19"/>
        <end position="247"/>
    </location>
</feature>
<feature type="propeptide" id="PRO_0000019631" evidence="1">
    <location>
        <begin position="19"/>
        <end position="128"/>
    </location>
</feature>
<feature type="chain" id="PRO_0000019632" description="Neurotrophic factor BDNF">
    <location>
        <begin position="129"/>
        <end position="247"/>
    </location>
</feature>
<feature type="site" description="Cleavage; by MBTPS1" evidence="2">
    <location>
        <begin position="57"/>
        <end position="58"/>
    </location>
</feature>
<feature type="glycosylation site" description="N-linked (GlcNAc...) asparagine" evidence="3">
    <location>
        <position position="121"/>
    </location>
</feature>
<feature type="disulfide bond" evidence="2">
    <location>
        <begin position="141"/>
        <end position="208"/>
    </location>
</feature>
<feature type="disulfide bond" evidence="2">
    <location>
        <begin position="186"/>
        <end position="237"/>
    </location>
</feature>
<feature type="disulfide bond" evidence="2">
    <location>
        <begin position="196"/>
        <end position="239"/>
    </location>
</feature>
<sequence>MTILFLTMVISYFGCMKAAPMKEANVRGQGSLAYPGVRTHGTLESVNGPKAGSRRLTSLADTFEHVIEELLDEDQKGRPNEENSKDADLYTSRVMLSSQVPLEPPLLFLLEEYKNYLDAANMSVRVRRHSDPARRGELSVCDGISEWVTAADKKTAVDMSGGTVTVLEKVPVSKGQLKQYFYETKCNPMGYTKEGCRGIDKRHWNSQCRTTQSYVRALTMDSKKRIGWRFIRIDTSCVCTLTIKRGR</sequence>
<comment type="function">
    <text evidence="1 2">Important signaling molecule that activates signaling cascades downstream of NTRK2 (By similarity). During development, promotes the survival and differentiation of selected neuronal populations of the peripheral and central nervous systems. Participates in axonal growth, pathfinding and in the modulation of dendritic growth and morphology. Major regulator of synaptic transmission and plasticity at adult synapses in many regions of the CNS. The versatility of BDNF is emphasized by its contribution to a range of adaptive neuronal responses including long-term potentiation (LTP), long-term depression (LTD), certain forms of short-term synaptic plasticity, as well as homeostatic regulation of intrinsic neuronal excitability (By similarity).</text>
</comment>
<comment type="function">
    <molecule>Neurotrophic factor BDNF precursor form</molecule>
    <text evidence="1">Important signaling molecule that activates signaling cascades downstream of NTRK2. Activates signaling cascades via the heterodimeric receptor formed by NGFR and SORCS2. Signaling via NGFR and SORCS2 plays a role in synaptic plasticity and long-term depression (LTD). Binding to NGFR and SORCS2 promotes neuronal apoptosis. Promotes neuronal growth cone collapse.</text>
</comment>
<comment type="subunit">
    <text evidence="1 2">Monomers and homodimers (By similarity). Binds to NTRK2/TRKB. Can form heterodimers with other neurotrophin family members, such as NTF3 and NTF4 (in vitro), but the physiological relevance of this is not clear (By similarity). BDNF precursor form: interacts with the heterodimer formed by NGFR and SORCS2. Mature BDNF has much lower affinity for the heterodimer formed by NGFR and SORCS2 (By similarity).</text>
</comment>
<comment type="subcellular location">
    <subcellularLocation>
        <location evidence="2">Secreted</location>
    </subcellularLocation>
</comment>
<comment type="subcellular location">
    <molecule>Neurotrophic factor BDNF precursor form</molecule>
    <subcellularLocation>
        <location evidence="2">Secreted</location>
    </subcellularLocation>
    <text evidence="2">A proportion of BDNF is secreted as immature precursor (proBDNF).</text>
</comment>
<comment type="PTM">
    <molecule>Neurotrophic factor BDNF precursor form</molecule>
    <text evidence="2">N-glycosylated and glycosulfated, contrary to mature BDNF.</text>
</comment>
<comment type="PTM">
    <text evidence="2">Mature BDNF is produced by proteolytic removal of the propeptide, catalyzed by a FURIN family member. In addition, the precursor form is proteolytically cleaved within the propeptide, but this is not an obligatory intermediate for the production of mature BDNF. Can be converted into mature BDNF by plasmin (PLG).</text>
</comment>
<comment type="similarity">
    <text evidence="4">Belongs to the NGF-beta family.</text>
</comment>
<accession>Q9TST3</accession>
<keyword id="KW-0165">Cleavage on pair of basic residues</keyword>
<keyword id="KW-1015">Disulfide bond</keyword>
<keyword id="KW-0325">Glycoprotein</keyword>
<keyword id="KW-0339">Growth factor</keyword>
<keyword id="KW-1185">Reference proteome</keyword>
<keyword id="KW-0964">Secreted</keyword>
<keyword id="KW-0732">Signal</keyword>
<organism>
    <name type="scientific">Felis catus</name>
    <name type="common">Cat</name>
    <name type="synonym">Felis silvestris catus</name>
    <dbReference type="NCBI Taxonomy" id="9685"/>
    <lineage>
        <taxon>Eukaryota</taxon>
        <taxon>Metazoa</taxon>
        <taxon>Chordata</taxon>
        <taxon>Craniata</taxon>
        <taxon>Vertebrata</taxon>
        <taxon>Euteleostomi</taxon>
        <taxon>Mammalia</taxon>
        <taxon>Eutheria</taxon>
        <taxon>Laurasiatheria</taxon>
        <taxon>Carnivora</taxon>
        <taxon>Feliformia</taxon>
        <taxon>Felidae</taxon>
        <taxon>Felinae</taxon>
        <taxon>Felis</taxon>
    </lineage>
</organism>
<protein>
    <recommendedName>
        <fullName evidence="4">Neurotrophic factor BDNF precursor form</fullName>
        <shortName>proBDNF</shortName>
    </recommendedName>
    <alternativeName>
        <fullName>Brain-derived neurotrophic factor</fullName>
    </alternativeName>
    <component>
        <recommendedName>
            <fullName>Neurotrophic factor BDNF</fullName>
        </recommendedName>
    </component>
</protein>
<gene>
    <name type="primary">BDNF</name>
</gene>
<evidence type="ECO:0000250" key="1">
    <source>
        <dbReference type="UniProtKB" id="P21237"/>
    </source>
</evidence>
<evidence type="ECO:0000250" key="2">
    <source>
        <dbReference type="UniProtKB" id="P23560"/>
    </source>
</evidence>
<evidence type="ECO:0000255" key="3"/>
<evidence type="ECO:0000305" key="4"/>